<reference key="1">
    <citation type="journal article" date="2009" name="Proc. Natl. Acad. Sci. U.S.A.">
        <title>Characterizing a model human gut microbiota composed of members of its two dominant bacterial phyla.</title>
        <authorList>
            <person name="Mahowald M.A."/>
            <person name="Rey F.E."/>
            <person name="Seedorf H."/>
            <person name="Turnbaugh P.J."/>
            <person name="Fulton R.S."/>
            <person name="Wollam A."/>
            <person name="Shah N."/>
            <person name="Wang C."/>
            <person name="Magrini V."/>
            <person name="Wilson R.K."/>
            <person name="Cantarel B.L."/>
            <person name="Coutinho P.M."/>
            <person name="Henrissat B."/>
            <person name="Crock L.W."/>
            <person name="Russell A."/>
            <person name="Verberkmoes N.C."/>
            <person name="Hettich R.L."/>
            <person name="Gordon J.I."/>
        </authorList>
    </citation>
    <scope>NUCLEOTIDE SEQUENCE [LARGE SCALE GENOMIC DNA]</scope>
    <source>
        <strain>ATCC 27750 / DSM 3376 / VPI C15-48 / C15-B4</strain>
    </source>
</reference>
<accession>C4Z2U0</accession>
<organism>
    <name type="scientific">Lachnospira eligens (strain ATCC 27750 / DSM 3376 / VPI C15-48 / C15-B4)</name>
    <name type="common">Eubacterium eligens</name>
    <dbReference type="NCBI Taxonomy" id="515620"/>
    <lineage>
        <taxon>Bacteria</taxon>
        <taxon>Bacillati</taxon>
        <taxon>Bacillota</taxon>
        <taxon>Clostridia</taxon>
        <taxon>Lachnospirales</taxon>
        <taxon>Lachnospiraceae</taxon>
        <taxon>Lachnospira</taxon>
    </lineage>
</organism>
<feature type="chain" id="PRO_1000214977" description="Large ribosomal subunit protein uL14">
    <location>
        <begin position="1"/>
        <end position="122"/>
    </location>
</feature>
<dbReference type="EMBL" id="CP001104">
    <property type="protein sequence ID" value="ACR71345.1"/>
    <property type="molecule type" value="Genomic_DNA"/>
</dbReference>
<dbReference type="RefSeq" id="WP_012738582.1">
    <property type="nucleotide sequence ID" value="NC_012778.1"/>
</dbReference>
<dbReference type="SMR" id="C4Z2U0"/>
<dbReference type="STRING" id="515620.EUBELI_00309"/>
<dbReference type="GeneID" id="41355082"/>
<dbReference type="KEGG" id="eel:EUBELI_00309"/>
<dbReference type="eggNOG" id="COG0093">
    <property type="taxonomic scope" value="Bacteria"/>
</dbReference>
<dbReference type="HOGENOM" id="CLU_095071_2_1_9"/>
<dbReference type="Proteomes" id="UP000001476">
    <property type="component" value="Chromosome"/>
</dbReference>
<dbReference type="GO" id="GO:0022625">
    <property type="term" value="C:cytosolic large ribosomal subunit"/>
    <property type="evidence" value="ECO:0007669"/>
    <property type="project" value="TreeGrafter"/>
</dbReference>
<dbReference type="GO" id="GO:0070180">
    <property type="term" value="F:large ribosomal subunit rRNA binding"/>
    <property type="evidence" value="ECO:0007669"/>
    <property type="project" value="TreeGrafter"/>
</dbReference>
<dbReference type="GO" id="GO:0003735">
    <property type="term" value="F:structural constituent of ribosome"/>
    <property type="evidence" value="ECO:0007669"/>
    <property type="project" value="InterPro"/>
</dbReference>
<dbReference type="GO" id="GO:0006412">
    <property type="term" value="P:translation"/>
    <property type="evidence" value="ECO:0007669"/>
    <property type="project" value="UniProtKB-UniRule"/>
</dbReference>
<dbReference type="CDD" id="cd00337">
    <property type="entry name" value="Ribosomal_uL14"/>
    <property type="match status" value="1"/>
</dbReference>
<dbReference type="FunFam" id="2.40.150.20:FF:000001">
    <property type="entry name" value="50S ribosomal protein L14"/>
    <property type="match status" value="1"/>
</dbReference>
<dbReference type="Gene3D" id="2.40.150.20">
    <property type="entry name" value="Ribosomal protein L14"/>
    <property type="match status" value="1"/>
</dbReference>
<dbReference type="HAMAP" id="MF_01367">
    <property type="entry name" value="Ribosomal_uL14"/>
    <property type="match status" value="1"/>
</dbReference>
<dbReference type="InterPro" id="IPR000218">
    <property type="entry name" value="Ribosomal_uL14"/>
</dbReference>
<dbReference type="InterPro" id="IPR005745">
    <property type="entry name" value="Ribosomal_uL14_bac-type"/>
</dbReference>
<dbReference type="InterPro" id="IPR019972">
    <property type="entry name" value="Ribosomal_uL14_CS"/>
</dbReference>
<dbReference type="InterPro" id="IPR036853">
    <property type="entry name" value="Ribosomal_uL14_sf"/>
</dbReference>
<dbReference type="NCBIfam" id="TIGR01067">
    <property type="entry name" value="rplN_bact"/>
    <property type="match status" value="1"/>
</dbReference>
<dbReference type="PANTHER" id="PTHR11761">
    <property type="entry name" value="50S/60S RIBOSOMAL PROTEIN L14/L23"/>
    <property type="match status" value="1"/>
</dbReference>
<dbReference type="PANTHER" id="PTHR11761:SF3">
    <property type="entry name" value="LARGE RIBOSOMAL SUBUNIT PROTEIN UL14M"/>
    <property type="match status" value="1"/>
</dbReference>
<dbReference type="Pfam" id="PF00238">
    <property type="entry name" value="Ribosomal_L14"/>
    <property type="match status" value="1"/>
</dbReference>
<dbReference type="SMART" id="SM01374">
    <property type="entry name" value="Ribosomal_L14"/>
    <property type="match status" value="1"/>
</dbReference>
<dbReference type="SUPFAM" id="SSF50193">
    <property type="entry name" value="Ribosomal protein L14"/>
    <property type="match status" value="1"/>
</dbReference>
<dbReference type="PROSITE" id="PS00049">
    <property type="entry name" value="RIBOSOMAL_L14"/>
    <property type="match status" value="1"/>
</dbReference>
<comment type="function">
    <text evidence="1">Binds to 23S rRNA. Forms part of two intersubunit bridges in the 70S ribosome.</text>
</comment>
<comment type="subunit">
    <text evidence="1">Part of the 50S ribosomal subunit. Forms a cluster with proteins L3 and L19. In the 70S ribosome, L14 and L19 interact and together make contacts with the 16S rRNA in bridges B5 and B8.</text>
</comment>
<comment type="similarity">
    <text evidence="1">Belongs to the universal ribosomal protein uL14 family.</text>
</comment>
<keyword id="KW-1185">Reference proteome</keyword>
<keyword id="KW-0687">Ribonucleoprotein</keyword>
<keyword id="KW-0689">Ribosomal protein</keyword>
<keyword id="KW-0694">RNA-binding</keyword>
<keyword id="KW-0699">rRNA-binding</keyword>
<sequence length="122" mass="13284">MVQQETRLKVADNTGAKEILCIRVMGGSTRRYANIGDVIVATVKEATPGGVVKKGDVVKAVVVRSVKGARRKDGSYIKFDENAAVIIKDDQTPKGTRIFGPVARELRDKKFMKIVSLAPEVL</sequence>
<name>RL14_LACE2</name>
<evidence type="ECO:0000255" key="1">
    <source>
        <dbReference type="HAMAP-Rule" id="MF_01367"/>
    </source>
</evidence>
<evidence type="ECO:0000305" key="2"/>
<gene>
    <name evidence="1" type="primary">rplN</name>
    <name type="ordered locus">EUBELI_00309</name>
</gene>
<proteinExistence type="inferred from homology"/>
<protein>
    <recommendedName>
        <fullName evidence="1">Large ribosomal subunit protein uL14</fullName>
    </recommendedName>
    <alternativeName>
        <fullName evidence="2">50S ribosomal protein L14</fullName>
    </alternativeName>
</protein>